<accession>A5DXE2</accession>
<evidence type="ECO:0000250" key="1"/>
<evidence type="ECO:0000250" key="2">
    <source>
        <dbReference type="UniProtKB" id="Q04491"/>
    </source>
</evidence>
<evidence type="ECO:0000305" key="3"/>
<organism>
    <name type="scientific">Lodderomyces elongisporus (strain ATCC 11503 / CBS 2605 / JCM 1781 / NBRC 1676 / NRRL YB-4239)</name>
    <name type="common">Yeast</name>
    <name type="synonym">Saccharomyces elongisporus</name>
    <dbReference type="NCBI Taxonomy" id="379508"/>
    <lineage>
        <taxon>Eukaryota</taxon>
        <taxon>Fungi</taxon>
        <taxon>Dikarya</taxon>
        <taxon>Ascomycota</taxon>
        <taxon>Saccharomycotina</taxon>
        <taxon>Pichiomycetes</taxon>
        <taxon>Debaryomycetaceae</taxon>
        <taxon>Candida/Lodderomyces clade</taxon>
        <taxon>Lodderomyces</taxon>
    </lineage>
</organism>
<dbReference type="EMBL" id="CH981525">
    <property type="protein sequence ID" value="EDK43850.1"/>
    <property type="molecule type" value="Genomic_DNA"/>
</dbReference>
<dbReference type="RefSeq" id="XP_001527200.1">
    <property type="nucleotide sequence ID" value="XM_001527150.1"/>
</dbReference>
<dbReference type="SMR" id="A5DXE2"/>
<dbReference type="FunCoup" id="A5DXE2">
    <property type="interactions" value="1055"/>
</dbReference>
<dbReference type="STRING" id="379508.A5DXE2"/>
<dbReference type="GeneID" id="5233653"/>
<dbReference type="KEGG" id="lel:PVL30_002004"/>
<dbReference type="VEuPathDB" id="FungiDB:LELG_02029"/>
<dbReference type="eggNOG" id="KOG1332">
    <property type="taxonomic scope" value="Eukaryota"/>
</dbReference>
<dbReference type="HOGENOM" id="CLU_032441_0_1_1"/>
<dbReference type="InParanoid" id="A5DXE2"/>
<dbReference type="OMA" id="IWKEEGD"/>
<dbReference type="OrthoDB" id="364224at2759"/>
<dbReference type="Proteomes" id="UP000001996">
    <property type="component" value="Unassembled WGS sequence"/>
</dbReference>
<dbReference type="GO" id="GO:0030127">
    <property type="term" value="C:COPII vesicle coat"/>
    <property type="evidence" value="ECO:0007669"/>
    <property type="project" value="EnsemblFungi"/>
</dbReference>
<dbReference type="GO" id="GO:0005789">
    <property type="term" value="C:endoplasmic reticulum membrane"/>
    <property type="evidence" value="ECO:0007669"/>
    <property type="project" value="UniProtKB-SubCell"/>
</dbReference>
<dbReference type="GO" id="GO:0061700">
    <property type="term" value="C:GATOR2 complex"/>
    <property type="evidence" value="ECO:0007669"/>
    <property type="project" value="EnsemblFungi"/>
</dbReference>
<dbReference type="GO" id="GO:0031080">
    <property type="term" value="C:nuclear pore outer ring"/>
    <property type="evidence" value="ECO:0007669"/>
    <property type="project" value="EnsemblFungi"/>
</dbReference>
<dbReference type="GO" id="GO:0005198">
    <property type="term" value="F:structural molecule activity"/>
    <property type="evidence" value="ECO:0007669"/>
    <property type="project" value="EnsemblFungi"/>
</dbReference>
<dbReference type="GO" id="GO:0090114">
    <property type="term" value="P:COPII-coated vesicle budding"/>
    <property type="evidence" value="ECO:0007669"/>
    <property type="project" value="EnsemblFungi"/>
</dbReference>
<dbReference type="GO" id="GO:0036503">
    <property type="term" value="P:ERAD pathway"/>
    <property type="evidence" value="ECO:0007669"/>
    <property type="project" value="EnsemblFungi"/>
</dbReference>
<dbReference type="GO" id="GO:0051028">
    <property type="term" value="P:mRNA transport"/>
    <property type="evidence" value="ECO:0007669"/>
    <property type="project" value="UniProtKB-KW"/>
</dbReference>
<dbReference type="GO" id="GO:0051664">
    <property type="term" value="P:nuclear pore localization"/>
    <property type="evidence" value="ECO:0007669"/>
    <property type="project" value="EnsemblFungi"/>
</dbReference>
<dbReference type="GO" id="GO:0045893">
    <property type="term" value="P:positive regulation of DNA-templated transcription"/>
    <property type="evidence" value="ECO:0007669"/>
    <property type="project" value="EnsemblFungi"/>
</dbReference>
<dbReference type="GO" id="GO:1902953">
    <property type="term" value="P:positive regulation of ER to Golgi vesicle-mediated transport"/>
    <property type="evidence" value="ECO:0007669"/>
    <property type="project" value="EnsemblFungi"/>
</dbReference>
<dbReference type="GO" id="GO:0070863">
    <property type="term" value="P:positive regulation of protein exit from endoplasmic reticulum"/>
    <property type="evidence" value="ECO:0007669"/>
    <property type="project" value="EnsemblFungi"/>
</dbReference>
<dbReference type="GO" id="GO:1904263">
    <property type="term" value="P:positive regulation of TORC1 signaling"/>
    <property type="evidence" value="ECO:0007669"/>
    <property type="project" value="EnsemblFungi"/>
</dbReference>
<dbReference type="GO" id="GO:0032527">
    <property type="term" value="P:protein exit from endoplasmic reticulum"/>
    <property type="evidence" value="ECO:0007669"/>
    <property type="project" value="TreeGrafter"/>
</dbReference>
<dbReference type="GO" id="GO:0006606">
    <property type="term" value="P:protein import into nucleus"/>
    <property type="evidence" value="ECO:0007669"/>
    <property type="project" value="TreeGrafter"/>
</dbReference>
<dbReference type="FunFam" id="2.130.10.10:FF:000017">
    <property type="entry name" value="SEC13 homolog (S. cerevisiae)"/>
    <property type="match status" value="1"/>
</dbReference>
<dbReference type="Gene3D" id="2.130.10.10">
    <property type="entry name" value="YVTN repeat-like/Quinoprotein amine dehydrogenase"/>
    <property type="match status" value="1"/>
</dbReference>
<dbReference type="InterPro" id="IPR037363">
    <property type="entry name" value="Sec13/Seh1_fam"/>
</dbReference>
<dbReference type="InterPro" id="IPR015943">
    <property type="entry name" value="WD40/YVTN_repeat-like_dom_sf"/>
</dbReference>
<dbReference type="InterPro" id="IPR036322">
    <property type="entry name" value="WD40_repeat_dom_sf"/>
</dbReference>
<dbReference type="InterPro" id="IPR001680">
    <property type="entry name" value="WD40_rpt"/>
</dbReference>
<dbReference type="PANTHER" id="PTHR11024">
    <property type="entry name" value="NUCLEAR PORE COMPLEX PROTEIN SEC13 / SEH1 FAMILY MEMBER"/>
    <property type="match status" value="1"/>
</dbReference>
<dbReference type="PANTHER" id="PTHR11024:SF2">
    <property type="entry name" value="PROTEIN SEC13 HOMOLOG"/>
    <property type="match status" value="1"/>
</dbReference>
<dbReference type="Pfam" id="PF00400">
    <property type="entry name" value="WD40"/>
    <property type="match status" value="5"/>
</dbReference>
<dbReference type="SMART" id="SM00320">
    <property type="entry name" value="WD40"/>
    <property type="match status" value="6"/>
</dbReference>
<dbReference type="SUPFAM" id="SSF50978">
    <property type="entry name" value="WD40 repeat-like"/>
    <property type="match status" value="1"/>
</dbReference>
<dbReference type="PROSITE" id="PS50082">
    <property type="entry name" value="WD_REPEATS_2"/>
    <property type="match status" value="3"/>
</dbReference>
<dbReference type="PROSITE" id="PS50294">
    <property type="entry name" value="WD_REPEATS_REGION"/>
    <property type="match status" value="1"/>
</dbReference>
<keyword id="KW-0968">Cytoplasmic vesicle</keyword>
<keyword id="KW-0256">Endoplasmic reticulum</keyword>
<keyword id="KW-0931">ER-Golgi transport</keyword>
<keyword id="KW-0472">Membrane</keyword>
<keyword id="KW-0509">mRNA transport</keyword>
<keyword id="KW-0906">Nuclear pore complex</keyword>
<keyword id="KW-0539">Nucleus</keyword>
<keyword id="KW-0653">Protein transport</keyword>
<keyword id="KW-1185">Reference proteome</keyword>
<keyword id="KW-0677">Repeat</keyword>
<keyword id="KW-0811">Translocation</keyword>
<keyword id="KW-0813">Transport</keyword>
<keyword id="KW-0853">WD repeat</keyword>
<name>SEC13_LODEL</name>
<protein>
    <recommendedName>
        <fullName>Protein transport protein SEC13</fullName>
    </recommendedName>
</protein>
<gene>
    <name type="primary">SEC13</name>
    <name type="ORF">LELG_02029</name>
</gene>
<proteinExistence type="inferred from homology"/>
<sequence>MVTIGNAHEDLIHDAVLDYYGKRLATCSSDKTIKIYDIEGTENYKLTATLTGHEGPIWQVAWAHPKFGSILASCSYDGKVLIWKEQQDTQQWSIIAEHTIHQASVNSVSWAPHELGAVLLCTSSDGKVSVVDFNDDGTTSHVIFDAHAIGVNSASWAPFTAASSTSSKDANTLKQHRRFVTCGSDNLVKIWKYDTALETYAEEAKLEGHTDWVRDVAWSPSNLVRPYIATASQDCTVLIWTQDKDGKWQSQPLTEEKFPDVCWRCSWSLSGNILAVSGGDNKVTLWKENLQGKWESAGEVELIK</sequence>
<reference key="1">
    <citation type="journal article" date="2009" name="Nature">
        <title>Evolution of pathogenicity and sexual reproduction in eight Candida genomes.</title>
        <authorList>
            <person name="Butler G."/>
            <person name="Rasmussen M.D."/>
            <person name="Lin M.F."/>
            <person name="Santos M.A.S."/>
            <person name="Sakthikumar S."/>
            <person name="Munro C.A."/>
            <person name="Rheinbay E."/>
            <person name="Grabherr M."/>
            <person name="Forche A."/>
            <person name="Reedy J.L."/>
            <person name="Agrafioti I."/>
            <person name="Arnaud M.B."/>
            <person name="Bates S."/>
            <person name="Brown A.J.P."/>
            <person name="Brunke S."/>
            <person name="Costanzo M.C."/>
            <person name="Fitzpatrick D.A."/>
            <person name="de Groot P.W.J."/>
            <person name="Harris D."/>
            <person name="Hoyer L.L."/>
            <person name="Hube B."/>
            <person name="Klis F.M."/>
            <person name="Kodira C."/>
            <person name="Lennard N."/>
            <person name="Logue M.E."/>
            <person name="Martin R."/>
            <person name="Neiman A.M."/>
            <person name="Nikolaou E."/>
            <person name="Quail M.A."/>
            <person name="Quinn J."/>
            <person name="Santos M.C."/>
            <person name="Schmitzberger F.F."/>
            <person name="Sherlock G."/>
            <person name="Shah P."/>
            <person name="Silverstein K.A.T."/>
            <person name="Skrzypek M.S."/>
            <person name="Soll D."/>
            <person name="Staggs R."/>
            <person name="Stansfield I."/>
            <person name="Stumpf M.P.H."/>
            <person name="Sudbery P.E."/>
            <person name="Srikantha T."/>
            <person name="Zeng Q."/>
            <person name="Berman J."/>
            <person name="Berriman M."/>
            <person name="Heitman J."/>
            <person name="Gow N.A.R."/>
            <person name="Lorenz M.C."/>
            <person name="Birren B.W."/>
            <person name="Kellis M."/>
            <person name="Cuomo C.A."/>
        </authorList>
    </citation>
    <scope>NUCLEOTIDE SEQUENCE [LARGE SCALE GENOMIC DNA]</scope>
    <source>
        <strain>ATCC 11503 / BCRC 21390 / CBS 2605 / JCM 1781 / NBRC 1676 / NRRL YB-4239</strain>
    </source>
</reference>
<comment type="function">
    <text evidence="2">Component of the coat protein complex II (COPII) which promotes the formation of transport vesicles from the endoplasmic reticulum (ER). The coat has two main functions, the physical deformation of the endoplasmic reticulum membrane into vesicles and the selection of cargo molecules. It also functions as a component of the nuclear pore complex (NPC). NPC components, collectively referred to as nucleoporins (NUPs), can play the role of both NPC structural components and of docking or interaction partners for transiently associated nuclear transport factors. SEC13 is required for efficient mRNA export from the nucleus to the cytoplasm and for correct nuclear pore biogenesis and distribution (By similarity).</text>
</comment>
<comment type="subunit">
    <text evidence="2">The COPII coat is composed of at least 5 proteins: the SEC23/24 complex, the SEC13/31 complex, and the protein SAR1. Component of the nuclear pore complex (NPC). NPC constitutes the exclusive means of nucleocytoplasmic transport. NPCs allow the passive diffusion of ions and small molecules and the active, nuclear transport receptor-mediated bidirectional transport of macromolecules such as proteins, RNAs, ribonucleoparticles (RNPs), and ribosomal subunits across the nuclear envelope. Due to its 8-fold rotational symmetry, all subunits are present with 8 copies or multiples thereof.</text>
</comment>
<comment type="subcellular location">
    <subcellularLocation>
        <location evidence="1">Cytoplasmic vesicle</location>
        <location evidence="1">COPII-coated vesicle membrane</location>
        <topology evidence="1">Peripheral membrane protein</topology>
        <orientation evidence="1">Cytoplasmic side</orientation>
    </subcellularLocation>
    <subcellularLocation>
        <location evidence="1">Endoplasmic reticulum membrane</location>
        <topology evidence="1">Peripheral membrane protein</topology>
        <orientation evidence="1">Cytoplasmic side</orientation>
    </subcellularLocation>
    <subcellularLocation>
        <location evidence="2">Nucleus</location>
        <location evidence="2">Nuclear pore complex</location>
    </subcellularLocation>
</comment>
<comment type="similarity">
    <text evidence="3">Belongs to the WD repeat SEC13 family.</text>
</comment>
<feature type="chain" id="PRO_0000295417" description="Protein transport protein SEC13">
    <location>
        <begin position="1"/>
        <end position="304"/>
    </location>
</feature>
<feature type="repeat" description="WD 1">
    <location>
        <begin position="7"/>
        <end position="46"/>
    </location>
</feature>
<feature type="repeat" description="WD 2">
    <location>
        <begin position="52"/>
        <end position="93"/>
    </location>
</feature>
<feature type="repeat" description="WD 3">
    <location>
        <begin position="100"/>
        <end position="141"/>
    </location>
</feature>
<feature type="repeat" description="WD 4">
    <location>
        <begin position="146"/>
        <end position="201"/>
    </location>
</feature>
<feature type="repeat" description="WD 5">
    <location>
        <begin position="208"/>
        <end position="250"/>
    </location>
</feature>
<feature type="repeat" description="WD 6">
    <location>
        <begin position="257"/>
        <end position="296"/>
    </location>
</feature>